<keyword id="KW-0067">ATP-binding</keyword>
<keyword id="KW-0963">Cytoplasm</keyword>
<keyword id="KW-0227">DNA damage</keyword>
<keyword id="KW-0233">DNA recombination</keyword>
<keyword id="KW-0234">DNA repair</keyword>
<keyword id="KW-0238">DNA-binding</keyword>
<keyword id="KW-0547">Nucleotide-binding</keyword>
<keyword id="KW-0742">SOS response</keyword>
<name>RECA_CORGB</name>
<organism>
    <name type="scientific">Corynebacterium glutamicum (strain R)</name>
    <dbReference type="NCBI Taxonomy" id="340322"/>
    <lineage>
        <taxon>Bacteria</taxon>
        <taxon>Bacillati</taxon>
        <taxon>Actinomycetota</taxon>
        <taxon>Actinomycetes</taxon>
        <taxon>Mycobacteriales</taxon>
        <taxon>Corynebacteriaceae</taxon>
        <taxon>Corynebacterium</taxon>
    </lineage>
</organism>
<evidence type="ECO:0000255" key="1">
    <source>
        <dbReference type="HAMAP-Rule" id="MF_00268"/>
    </source>
</evidence>
<evidence type="ECO:0000256" key="2">
    <source>
        <dbReference type="SAM" id="MobiDB-lite"/>
    </source>
</evidence>
<proteinExistence type="inferred from homology"/>
<reference key="1">
    <citation type="journal article" date="2007" name="Microbiology">
        <title>Comparative analysis of the Corynebacterium glutamicum group and complete genome sequence of strain R.</title>
        <authorList>
            <person name="Yukawa H."/>
            <person name="Omumasaba C.A."/>
            <person name="Nonaka H."/>
            <person name="Kos P."/>
            <person name="Okai N."/>
            <person name="Suzuki N."/>
            <person name="Suda M."/>
            <person name="Tsuge Y."/>
            <person name="Watanabe J."/>
            <person name="Ikeda Y."/>
            <person name="Vertes A.A."/>
            <person name="Inui M."/>
        </authorList>
    </citation>
    <scope>NUCLEOTIDE SEQUENCE [LARGE SCALE GENOMIC DNA]</scope>
    <source>
        <strain>R</strain>
    </source>
</reference>
<feature type="chain" id="PRO_1000047906" description="Protein RecA">
    <location>
        <begin position="1"/>
        <end position="376"/>
    </location>
</feature>
<feature type="region of interest" description="Disordered" evidence="2">
    <location>
        <begin position="355"/>
        <end position="376"/>
    </location>
</feature>
<feature type="compositionally biased region" description="Acidic residues" evidence="2">
    <location>
        <begin position="363"/>
        <end position="376"/>
    </location>
</feature>
<feature type="binding site" evidence="1">
    <location>
        <begin position="78"/>
        <end position="85"/>
    </location>
    <ligand>
        <name>ATP</name>
        <dbReference type="ChEBI" id="CHEBI:30616"/>
    </ligand>
</feature>
<gene>
    <name evidence="1" type="primary">recA</name>
    <name type="ordered locus">cgR_1785</name>
</gene>
<accession>A4QEW3</accession>
<dbReference type="EMBL" id="AP009044">
    <property type="protein sequence ID" value="BAF54779.1"/>
    <property type="molecule type" value="Genomic_DNA"/>
</dbReference>
<dbReference type="RefSeq" id="WP_003857444.1">
    <property type="nucleotide sequence ID" value="NC_009342.1"/>
</dbReference>
<dbReference type="SMR" id="A4QEW3"/>
<dbReference type="GeneID" id="1019912"/>
<dbReference type="KEGG" id="cgt:cgR_1785"/>
<dbReference type="HOGENOM" id="CLU_040469_3_2_11"/>
<dbReference type="PhylomeDB" id="A4QEW3"/>
<dbReference type="Proteomes" id="UP000006698">
    <property type="component" value="Chromosome"/>
</dbReference>
<dbReference type="GO" id="GO:0005829">
    <property type="term" value="C:cytosol"/>
    <property type="evidence" value="ECO:0007669"/>
    <property type="project" value="TreeGrafter"/>
</dbReference>
<dbReference type="GO" id="GO:0005524">
    <property type="term" value="F:ATP binding"/>
    <property type="evidence" value="ECO:0007669"/>
    <property type="project" value="UniProtKB-UniRule"/>
</dbReference>
<dbReference type="GO" id="GO:0016887">
    <property type="term" value="F:ATP hydrolysis activity"/>
    <property type="evidence" value="ECO:0007669"/>
    <property type="project" value="InterPro"/>
</dbReference>
<dbReference type="GO" id="GO:0140664">
    <property type="term" value="F:ATP-dependent DNA damage sensor activity"/>
    <property type="evidence" value="ECO:0007669"/>
    <property type="project" value="InterPro"/>
</dbReference>
<dbReference type="GO" id="GO:0003684">
    <property type="term" value="F:damaged DNA binding"/>
    <property type="evidence" value="ECO:0007669"/>
    <property type="project" value="UniProtKB-UniRule"/>
</dbReference>
<dbReference type="GO" id="GO:0003697">
    <property type="term" value="F:single-stranded DNA binding"/>
    <property type="evidence" value="ECO:0007669"/>
    <property type="project" value="UniProtKB-UniRule"/>
</dbReference>
<dbReference type="GO" id="GO:0006310">
    <property type="term" value="P:DNA recombination"/>
    <property type="evidence" value="ECO:0007669"/>
    <property type="project" value="UniProtKB-UniRule"/>
</dbReference>
<dbReference type="GO" id="GO:0006281">
    <property type="term" value="P:DNA repair"/>
    <property type="evidence" value="ECO:0007669"/>
    <property type="project" value="UniProtKB-UniRule"/>
</dbReference>
<dbReference type="GO" id="GO:0009432">
    <property type="term" value="P:SOS response"/>
    <property type="evidence" value="ECO:0007669"/>
    <property type="project" value="UniProtKB-UniRule"/>
</dbReference>
<dbReference type="CDD" id="cd00983">
    <property type="entry name" value="RecA"/>
    <property type="match status" value="1"/>
</dbReference>
<dbReference type="FunFam" id="3.40.50.300:FF:000087">
    <property type="entry name" value="Recombinase RecA"/>
    <property type="match status" value="1"/>
</dbReference>
<dbReference type="Gene3D" id="3.40.50.300">
    <property type="entry name" value="P-loop containing nucleotide triphosphate hydrolases"/>
    <property type="match status" value="1"/>
</dbReference>
<dbReference type="HAMAP" id="MF_00268">
    <property type="entry name" value="RecA"/>
    <property type="match status" value="1"/>
</dbReference>
<dbReference type="InterPro" id="IPR003593">
    <property type="entry name" value="AAA+_ATPase"/>
</dbReference>
<dbReference type="InterPro" id="IPR013765">
    <property type="entry name" value="DNA_recomb/repair_RecA"/>
</dbReference>
<dbReference type="InterPro" id="IPR020584">
    <property type="entry name" value="DNA_recomb/repair_RecA_CS"/>
</dbReference>
<dbReference type="InterPro" id="IPR027417">
    <property type="entry name" value="P-loop_NTPase"/>
</dbReference>
<dbReference type="InterPro" id="IPR049261">
    <property type="entry name" value="RecA-like_C"/>
</dbReference>
<dbReference type="InterPro" id="IPR049428">
    <property type="entry name" value="RecA-like_N"/>
</dbReference>
<dbReference type="InterPro" id="IPR020588">
    <property type="entry name" value="RecA_ATP-bd"/>
</dbReference>
<dbReference type="InterPro" id="IPR023400">
    <property type="entry name" value="RecA_C_sf"/>
</dbReference>
<dbReference type="InterPro" id="IPR020587">
    <property type="entry name" value="RecA_monomer-monomer_interface"/>
</dbReference>
<dbReference type="NCBIfam" id="TIGR02012">
    <property type="entry name" value="tigrfam_recA"/>
    <property type="match status" value="1"/>
</dbReference>
<dbReference type="PANTHER" id="PTHR45900:SF1">
    <property type="entry name" value="MITOCHONDRIAL DNA REPAIR PROTEIN RECA HOMOLOG-RELATED"/>
    <property type="match status" value="1"/>
</dbReference>
<dbReference type="PANTHER" id="PTHR45900">
    <property type="entry name" value="RECA"/>
    <property type="match status" value="1"/>
</dbReference>
<dbReference type="Pfam" id="PF00154">
    <property type="entry name" value="RecA"/>
    <property type="match status" value="1"/>
</dbReference>
<dbReference type="Pfam" id="PF21096">
    <property type="entry name" value="RecA_C"/>
    <property type="match status" value="1"/>
</dbReference>
<dbReference type="PRINTS" id="PR00142">
    <property type="entry name" value="RECA"/>
</dbReference>
<dbReference type="SMART" id="SM00382">
    <property type="entry name" value="AAA"/>
    <property type="match status" value="1"/>
</dbReference>
<dbReference type="SUPFAM" id="SSF52540">
    <property type="entry name" value="P-loop containing nucleoside triphosphate hydrolases"/>
    <property type="match status" value="1"/>
</dbReference>
<dbReference type="SUPFAM" id="SSF54752">
    <property type="entry name" value="RecA protein, C-terminal domain"/>
    <property type="match status" value="1"/>
</dbReference>
<dbReference type="PROSITE" id="PS00321">
    <property type="entry name" value="RECA_1"/>
    <property type="match status" value="1"/>
</dbReference>
<dbReference type="PROSITE" id="PS50162">
    <property type="entry name" value="RECA_2"/>
    <property type="match status" value="1"/>
</dbReference>
<dbReference type="PROSITE" id="PS50163">
    <property type="entry name" value="RECA_3"/>
    <property type="match status" value="1"/>
</dbReference>
<comment type="function">
    <text evidence="1">Can catalyze the hydrolysis of ATP in the presence of single-stranded DNA, the ATP-dependent uptake of single-stranded DNA by duplex DNA, and the ATP-dependent hybridization of homologous single-stranded DNAs. It interacts with LexA causing its activation and leading to its autocatalytic cleavage.</text>
</comment>
<comment type="subcellular location">
    <subcellularLocation>
        <location evidence="1">Cytoplasm</location>
    </subcellularLocation>
</comment>
<comment type="similarity">
    <text evidence="1">Belongs to the RecA family.</text>
</comment>
<protein>
    <recommendedName>
        <fullName evidence="1">Protein RecA</fullName>
    </recommendedName>
    <alternativeName>
        <fullName evidence="1">Recombinase A</fullName>
    </alternativeName>
</protein>
<sequence>MAPKKTATKATAAKGNDRQKALDAALALIEKDFGKGAVMRLGDENRPPIQTISSGNTAIDIALGIGGFPRGRIVEVYGPESSGKTTVALHAIAQAQKAGGIAAFIDAEHALDPDYARKLGVDTDALLVSQPDTGEQALEIADMLVRSGAIDIIVIDSVAALTPKAEIEGEMGDSHVGLQARLMSQALRKMTGALYNSGTTAIFINQLREKIGVMFGSPETTTGGKALKFYASVRCDIRRIQTLKDGQDAIGNRTRLKVVKNKVSPPFKIAEFDIMYGEGISRESSVIDLAVDNGIVKKSGSWFTYEGEQLGQGKEKVRLSLKENPELTDELEDKIFKKLGVGKYAAASDELTDDPVELVPNVDFDDEADTEADAED</sequence>